<protein>
    <recommendedName>
        <fullName>Pre-mRNA polyadenylation factor FIP1</fullName>
    </recommendedName>
</protein>
<evidence type="ECO:0000250" key="1"/>
<evidence type="ECO:0000256" key="2">
    <source>
        <dbReference type="SAM" id="MobiDB-lite"/>
    </source>
</evidence>
<evidence type="ECO:0000305" key="3"/>
<organism>
    <name type="scientific">Debaryomyces hansenii (strain ATCC 36239 / CBS 767 / BCRC 21394 / JCM 1990 / NBRC 0083 / IGC 2968)</name>
    <name type="common">Yeast</name>
    <name type="synonym">Torulaspora hansenii</name>
    <dbReference type="NCBI Taxonomy" id="284592"/>
    <lineage>
        <taxon>Eukaryota</taxon>
        <taxon>Fungi</taxon>
        <taxon>Dikarya</taxon>
        <taxon>Ascomycota</taxon>
        <taxon>Saccharomycotina</taxon>
        <taxon>Pichiomycetes</taxon>
        <taxon>Debaryomycetaceae</taxon>
        <taxon>Debaryomyces</taxon>
    </lineage>
</organism>
<name>FIP1_DEBHA</name>
<gene>
    <name type="primary">FIP1</name>
    <name type="ordered locus">DEHA2G24398g</name>
</gene>
<reference key="1">
    <citation type="journal article" date="2004" name="Nature">
        <title>Genome evolution in yeasts.</title>
        <authorList>
            <person name="Dujon B."/>
            <person name="Sherman D."/>
            <person name="Fischer G."/>
            <person name="Durrens P."/>
            <person name="Casaregola S."/>
            <person name="Lafontaine I."/>
            <person name="de Montigny J."/>
            <person name="Marck C."/>
            <person name="Neuveglise C."/>
            <person name="Talla E."/>
            <person name="Goffard N."/>
            <person name="Frangeul L."/>
            <person name="Aigle M."/>
            <person name="Anthouard V."/>
            <person name="Babour A."/>
            <person name="Barbe V."/>
            <person name="Barnay S."/>
            <person name="Blanchin S."/>
            <person name="Beckerich J.-M."/>
            <person name="Beyne E."/>
            <person name="Bleykasten C."/>
            <person name="Boisrame A."/>
            <person name="Boyer J."/>
            <person name="Cattolico L."/>
            <person name="Confanioleri F."/>
            <person name="de Daruvar A."/>
            <person name="Despons L."/>
            <person name="Fabre E."/>
            <person name="Fairhead C."/>
            <person name="Ferry-Dumazet H."/>
            <person name="Groppi A."/>
            <person name="Hantraye F."/>
            <person name="Hennequin C."/>
            <person name="Jauniaux N."/>
            <person name="Joyet P."/>
            <person name="Kachouri R."/>
            <person name="Kerrest A."/>
            <person name="Koszul R."/>
            <person name="Lemaire M."/>
            <person name="Lesur I."/>
            <person name="Ma L."/>
            <person name="Muller H."/>
            <person name="Nicaud J.-M."/>
            <person name="Nikolski M."/>
            <person name="Oztas S."/>
            <person name="Ozier-Kalogeropoulos O."/>
            <person name="Pellenz S."/>
            <person name="Potier S."/>
            <person name="Richard G.-F."/>
            <person name="Straub M.-L."/>
            <person name="Suleau A."/>
            <person name="Swennen D."/>
            <person name="Tekaia F."/>
            <person name="Wesolowski-Louvel M."/>
            <person name="Westhof E."/>
            <person name="Wirth B."/>
            <person name="Zeniou-Meyer M."/>
            <person name="Zivanovic Y."/>
            <person name="Bolotin-Fukuhara M."/>
            <person name="Thierry A."/>
            <person name="Bouchier C."/>
            <person name="Caudron B."/>
            <person name="Scarpelli C."/>
            <person name="Gaillardin C."/>
            <person name="Weissenbach J."/>
            <person name="Wincker P."/>
            <person name="Souciet J.-L."/>
        </authorList>
    </citation>
    <scope>NUCLEOTIDE SEQUENCE [LARGE SCALE GENOMIC DNA]</scope>
    <source>
        <strain>ATCC 36239 / CBS 767 / BCRC 21394 / JCM 1990 / NBRC 0083 / IGC 2968</strain>
    </source>
</reference>
<sequence>MAGKHSDDEDAYLYGSDDDNDQPVSKKQKITEQSDESQEKLSKTTAAKKSEVEEKDSLENSSNDEDDNDSEEDSDSDDDIEFVIGESAPKSGQTITTSGPQNDTIDAVTDMDAGGDKNATTTIVSNQADKGSSIDINSVAQLDGKPLTQVDLEKLKDKPWRFPGADISDYFNYGFDEFTWTAYCCKQDKLRGEFNPQKLMAQLMSGGAGPPPMPSGKSGSNNTPTNKPTAMSPPMGMPPMGMMPPGMPMMPGMPGMPGMPNMSNMPNMPNMPNMPNMPNMPNMPNMPNMNNMPNMPNMPNMPNFMNNSRPGQVPNFGIPPPPPPQNRR</sequence>
<proteinExistence type="inferred from homology"/>
<comment type="function">
    <text evidence="1">Pre-mRNA polyadenylation factor that directly interacts with poly(A) polymerase.</text>
</comment>
<comment type="subcellular location">
    <subcellularLocation>
        <location evidence="1">Nucleus</location>
    </subcellularLocation>
</comment>
<comment type="similarity">
    <text evidence="3">Belongs to the FIP1 family.</text>
</comment>
<keyword id="KW-0507">mRNA processing</keyword>
<keyword id="KW-0539">Nucleus</keyword>
<keyword id="KW-1185">Reference proteome</keyword>
<accession>Q6BGR9</accession>
<dbReference type="EMBL" id="CR382139">
    <property type="protein sequence ID" value="CAG91117.2"/>
    <property type="molecule type" value="Genomic_DNA"/>
</dbReference>
<dbReference type="RefSeq" id="XP_462602.2">
    <property type="nucleotide sequence ID" value="XM_462602.1"/>
</dbReference>
<dbReference type="SMR" id="Q6BGR9"/>
<dbReference type="FunCoup" id="Q6BGR9">
    <property type="interactions" value="240"/>
</dbReference>
<dbReference type="STRING" id="284592.Q6BGR9"/>
<dbReference type="GeneID" id="2905564"/>
<dbReference type="KEGG" id="dha:DEHA2G24398g"/>
<dbReference type="VEuPathDB" id="FungiDB:DEHA2G24398g"/>
<dbReference type="eggNOG" id="KOG1049">
    <property type="taxonomic scope" value="Eukaryota"/>
</dbReference>
<dbReference type="HOGENOM" id="CLU_039307_2_0_1"/>
<dbReference type="InParanoid" id="Q6BGR9"/>
<dbReference type="OMA" id="GFNEYTW"/>
<dbReference type="OrthoDB" id="1917198at2759"/>
<dbReference type="Proteomes" id="UP000000599">
    <property type="component" value="Chromosome G"/>
</dbReference>
<dbReference type="GO" id="GO:0005847">
    <property type="term" value="C:mRNA cleavage and polyadenylation specificity factor complex"/>
    <property type="evidence" value="ECO:0007669"/>
    <property type="project" value="TreeGrafter"/>
</dbReference>
<dbReference type="GO" id="GO:0006397">
    <property type="term" value="P:mRNA processing"/>
    <property type="evidence" value="ECO:0007669"/>
    <property type="project" value="UniProtKB-KW"/>
</dbReference>
<dbReference type="InterPro" id="IPR007854">
    <property type="entry name" value="Fip1_dom"/>
</dbReference>
<dbReference type="InterPro" id="IPR051187">
    <property type="entry name" value="Pre-mRNA_3'-end_processing_reg"/>
</dbReference>
<dbReference type="PANTHER" id="PTHR13484">
    <property type="entry name" value="FIP1-LIKE 1 PROTEIN"/>
    <property type="match status" value="1"/>
</dbReference>
<dbReference type="PANTHER" id="PTHR13484:SF0">
    <property type="entry name" value="PRE-MRNA 3'-END-PROCESSING FACTOR FIP1"/>
    <property type="match status" value="1"/>
</dbReference>
<dbReference type="Pfam" id="PF05182">
    <property type="entry name" value="Fip1"/>
    <property type="match status" value="1"/>
</dbReference>
<feature type="chain" id="PRO_0000238511" description="Pre-mRNA polyadenylation factor FIP1">
    <location>
        <begin position="1"/>
        <end position="328"/>
    </location>
</feature>
<feature type="region of interest" description="Disordered" evidence="2">
    <location>
        <begin position="1"/>
        <end position="105"/>
    </location>
</feature>
<feature type="region of interest" description="Disordered" evidence="2">
    <location>
        <begin position="204"/>
        <end position="237"/>
    </location>
</feature>
<feature type="region of interest" description="Disordered" evidence="2">
    <location>
        <begin position="292"/>
        <end position="328"/>
    </location>
</feature>
<feature type="compositionally biased region" description="Acidic residues" evidence="2">
    <location>
        <begin position="8"/>
        <end position="21"/>
    </location>
</feature>
<feature type="compositionally biased region" description="Basic and acidic residues" evidence="2">
    <location>
        <begin position="29"/>
        <end position="58"/>
    </location>
</feature>
<feature type="compositionally biased region" description="Acidic residues" evidence="2">
    <location>
        <begin position="62"/>
        <end position="81"/>
    </location>
</feature>
<feature type="compositionally biased region" description="Polar residues" evidence="2">
    <location>
        <begin position="90"/>
        <end position="104"/>
    </location>
</feature>
<feature type="compositionally biased region" description="Low complexity" evidence="2">
    <location>
        <begin position="292"/>
        <end position="307"/>
    </location>
</feature>
<feature type="compositionally biased region" description="Pro residues" evidence="2">
    <location>
        <begin position="317"/>
        <end position="328"/>
    </location>
</feature>